<gene>
    <name evidence="11" type="primary">NARS2</name>
</gene>
<evidence type="ECO:0000250" key="1"/>
<evidence type="ECO:0000255" key="2"/>
<evidence type="ECO:0000269" key="3">
    <source>
    </source>
</evidence>
<evidence type="ECO:0000269" key="4">
    <source>
    </source>
</evidence>
<evidence type="ECO:0000269" key="5">
    <source>
    </source>
</evidence>
<evidence type="ECO:0000269" key="6">
    <source>
    </source>
</evidence>
<evidence type="ECO:0000269" key="7">
    <source>
    </source>
</evidence>
<evidence type="ECO:0000303" key="8">
    <source>
    </source>
</evidence>
<evidence type="ECO:0000303" key="9">
    <source>
    </source>
</evidence>
<evidence type="ECO:0000305" key="10"/>
<evidence type="ECO:0000312" key="11">
    <source>
        <dbReference type="HGNC" id="HGNC:26274"/>
    </source>
</evidence>
<evidence type="ECO:0007744" key="12">
    <source>
    </source>
</evidence>
<protein>
    <recommendedName>
        <fullName evidence="9">Asparaginyl-tRNA synthetase</fullName>
        <shortName evidence="8">AsnRS</shortName>
        <shortName evidence="9">NARS2</shortName>
        <ecNumber evidence="4">6.1.1.22</ecNumber>
    </recommendedName>
    <alternativeName>
        <fullName>Asparagine--tRNA ligase, mitochondrial</fullName>
    </alternativeName>
</protein>
<name>SYNM_HUMAN</name>
<feature type="transit peptide" description="Mitochondrion" evidence="2">
    <location>
        <begin position="1"/>
        <end position="14"/>
    </location>
</feature>
<feature type="chain" id="PRO_0000250722" description="Asparaginyl-tRNA synthetase">
    <location>
        <begin position="15"/>
        <end position="477"/>
    </location>
</feature>
<feature type="modified residue" description="N6-acetyllysine" evidence="12">
    <location>
        <position position="353"/>
    </location>
</feature>
<feature type="splice variant" id="VSP_054120" description="In isoform 2." evidence="10">
    <location>
        <begin position="1"/>
        <end position="227"/>
    </location>
</feature>
<feature type="sequence variant" id="VAR_052636" description="In dbSNP:rs10501429." evidence="3">
    <original>N</original>
    <variation>T</variation>
    <location>
        <position position="87"/>
    </location>
</feature>
<feature type="sequence variant" id="VAR_073723" description="In DFNB94; uncertain significance; unable to rescue mitochondrial respiratory chain defects in NARS2 null fibroblasts; does not affect homodimerization; does not affect localization to mitochondrion; dbSNP:rs756725793." evidence="6">
    <original>V</original>
    <variation>F</variation>
    <location>
        <position position="213"/>
    </location>
</feature>
<feature type="sequence variant" id="VAR_073250" description="In COXPD24; dbSNP:rs730882155." evidence="5">
    <original>P</original>
    <variation>L</variation>
    <location>
        <position position="214"/>
    </location>
</feature>
<feature type="sequence variant" id="VAR_082311" description="In COXPD24." evidence="6">
    <location>
        <begin position="323"/>
        <end position="477"/>
    </location>
</feature>
<feature type="sequence variant" id="VAR_086708" description="In COXPD24; uncertain significance; no effect on homodimer formation; does not affect localization to mitochondrion; dbSNP:rs2135213081." evidence="7">
    <original>N</original>
    <variation>D</variation>
    <location>
        <position position="381"/>
    </location>
</feature>
<feature type="sequence variant" id="VAR_073724" description="In COXPD24; does not form homodimers; does not affect localization to mitochondrion; dbSNP:rs1565216037." evidence="6">
    <original>N</original>
    <variation>S</variation>
    <location>
        <position position="381"/>
    </location>
</feature>
<feature type="sequence variant" id="VAR_086709" description="In COXPD24; uncertain significance; no effect on homodimer formation; does not affect localization to mitochondrion; dbSNP:rs2135124873." evidence="7">
    <original>W</original>
    <variation>C</variation>
    <location>
        <position position="430"/>
    </location>
</feature>
<proteinExistence type="evidence at protein level"/>
<comment type="function">
    <text evidence="4 10">Mitochondrial aminoacyl-tRNA synthetase that catalyzes the specific attachment of the asparagine amino acid (aa) to the homologous transfer RNA (tRNA), further participating in protein synthesis (PubMed:25385316). The reaction occurs in a two steps: asparagine is first activated by ATP to form Asn-AMP and then transferred to the acceptor end of tRNA(Asn) (Probable).</text>
</comment>
<comment type="catalytic activity">
    <reaction evidence="4">
        <text>tRNA(Asn) + L-asparagine + ATP = L-asparaginyl-tRNA(Asn) + AMP + diphosphate + H(+)</text>
        <dbReference type="Rhea" id="RHEA:11180"/>
        <dbReference type="Rhea" id="RHEA-COMP:9659"/>
        <dbReference type="Rhea" id="RHEA-COMP:9674"/>
        <dbReference type="ChEBI" id="CHEBI:15378"/>
        <dbReference type="ChEBI" id="CHEBI:30616"/>
        <dbReference type="ChEBI" id="CHEBI:33019"/>
        <dbReference type="ChEBI" id="CHEBI:58048"/>
        <dbReference type="ChEBI" id="CHEBI:78442"/>
        <dbReference type="ChEBI" id="CHEBI:78515"/>
        <dbReference type="ChEBI" id="CHEBI:456215"/>
        <dbReference type="EC" id="6.1.1.22"/>
    </reaction>
</comment>
<comment type="subunit">
    <text evidence="6 7">Homodimer.</text>
</comment>
<comment type="subcellular location">
    <subcellularLocation>
        <location evidence="1">Mitochondrion matrix</location>
    </subcellularLocation>
    <subcellularLocation>
        <location evidence="6 7">Mitochondrion</location>
    </subcellularLocation>
</comment>
<comment type="alternative products">
    <event type="alternative splicing"/>
    <isoform>
        <id>Q96I59-1</id>
        <name>1</name>
        <sequence type="displayed"/>
    </isoform>
    <isoform>
        <id>Q96I59-2</id>
        <name>2</name>
        <sequence type="described" ref="VSP_054120"/>
    </isoform>
</comment>
<comment type="disease" evidence="4 5 6 7">
    <disease id="DI-04330">
        <name>Combined oxidative phosphorylation deficiency 24</name>
        <acronym>COXPD24</acronym>
        <description>An autosomal recessive mitochondrial disorder with wide phenotypic variability. Some patients have a milder form affecting only skeletal muscle, whereas others may have a more severe disorder, reminiscent of Alpers syndrome. Alpers syndrome is a progressive neurodegenerative disorder that presents in infancy or early childhood and is characterized by diffuse degeneration of cerebral gray matter.</description>
        <dbReference type="MIM" id="616239"/>
    </disease>
    <text>The disease is caused by variants affecting the gene represented in this entry.</text>
</comment>
<comment type="disease" evidence="6">
    <disease id="DI-05552">
        <name>Deafness, autosomal recessive, 94</name>
        <acronym>DFNB94</acronym>
        <description>A form of non-syndromic, sensorineural deafness characterized by prelingual, profound, bilateral hearing impairment. Sensorineural deafness results from damage to the neural receptors of the inner ear, the nerve pathways to the brain, or the area of the brain that receives sound information.</description>
        <dbReference type="MIM" id="618434"/>
    </disease>
    <text>The disease may be caused by variants affecting the gene represented in this entry.</text>
</comment>
<comment type="similarity">
    <text evidence="10">Belongs to the class-II aminoacyl-tRNA synthetase family.</text>
</comment>
<organism>
    <name type="scientific">Homo sapiens</name>
    <name type="common">Human</name>
    <dbReference type="NCBI Taxonomy" id="9606"/>
    <lineage>
        <taxon>Eukaryota</taxon>
        <taxon>Metazoa</taxon>
        <taxon>Chordata</taxon>
        <taxon>Craniata</taxon>
        <taxon>Vertebrata</taxon>
        <taxon>Euteleostomi</taxon>
        <taxon>Mammalia</taxon>
        <taxon>Eutheria</taxon>
        <taxon>Euarchontoglires</taxon>
        <taxon>Primates</taxon>
        <taxon>Haplorrhini</taxon>
        <taxon>Catarrhini</taxon>
        <taxon>Hominidae</taxon>
        <taxon>Homo</taxon>
    </lineage>
</organism>
<dbReference type="EC" id="6.1.1.22" evidence="4"/>
<dbReference type="EMBL" id="AP003086">
    <property type="status" value="NOT_ANNOTATED_CDS"/>
    <property type="molecule type" value="Genomic_DNA"/>
</dbReference>
<dbReference type="EMBL" id="AP003110">
    <property type="status" value="NOT_ANNOTATED_CDS"/>
    <property type="molecule type" value="Genomic_DNA"/>
</dbReference>
<dbReference type="EMBL" id="CH471076">
    <property type="protein sequence ID" value="EAW75061.1"/>
    <property type="molecule type" value="Genomic_DNA"/>
</dbReference>
<dbReference type="EMBL" id="BC007800">
    <property type="protein sequence ID" value="AAH07800.2"/>
    <property type="molecule type" value="mRNA"/>
</dbReference>
<dbReference type="CCDS" id="CCDS58164.1">
    <molecule id="Q96I59-2"/>
</dbReference>
<dbReference type="CCDS" id="CCDS8261.1">
    <molecule id="Q96I59-1"/>
</dbReference>
<dbReference type="RefSeq" id="NP_001230180.1">
    <molecule id="Q96I59-2"/>
    <property type="nucleotide sequence ID" value="NM_001243251.2"/>
</dbReference>
<dbReference type="RefSeq" id="NP_001412241.1">
    <molecule id="Q96I59-2"/>
    <property type="nucleotide sequence ID" value="NM_001425312.1"/>
</dbReference>
<dbReference type="RefSeq" id="NP_001412242.1">
    <molecule id="Q96I59-2"/>
    <property type="nucleotide sequence ID" value="NM_001425313.1"/>
</dbReference>
<dbReference type="RefSeq" id="NP_078954.4">
    <molecule id="Q96I59-1"/>
    <property type="nucleotide sequence ID" value="NM_024678.5"/>
</dbReference>
<dbReference type="RefSeq" id="XP_016873792.1">
    <property type="nucleotide sequence ID" value="XM_017018303.1"/>
</dbReference>
<dbReference type="SMR" id="Q96I59"/>
<dbReference type="BioGRID" id="122846">
    <property type="interactions" value="93"/>
</dbReference>
<dbReference type="FunCoup" id="Q96I59">
    <property type="interactions" value="2996"/>
</dbReference>
<dbReference type="IntAct" id="Q96I59">
    <property type="interactions" value="61"/>
</dbReference>
<dbReference type="STRING" id="9606.ENSP00000281038"/>
<dbReference type="DrugBank" id="DB00174">
    <property type="generic name" value="Asparagine"/>
</dbReference>
<dbReference type="GlyGen" id="Q96I59">
    <property type="glycosylation" value="1 site, 1 O-linked glycan (1 site)"/>
</dbReference>
<dbReference type="iPTMnet" id="Q96I59"/>
<dbReference type="PhosphoSitePlus" id="Q96I59"/>
<dbReference type="SwissPalm" id="Q96I59"/>
<dbReference type="BioMuta" id="NARS2"/>
<dbReference type="DMDM" id="296452944"/>
<dbReference type="jPOST" id="Q96I59"/>
<dbReference type="MassIVE" id="Q96I59"/>
<dbReference type="PaxDb" id="9606-ENSP00000281038"/>
<dbReference type="PeptideAtlas" id="Q96I59"/>
<dbReference type="ProteomicsDB" id="32283"/>
<dbReference type="ProteomicsDB" id="76813">
    <molecule id="Q96I59-1"/>
</dbReference>
<dbReference type="Pumba" id="Q96I59"/>
<dbReference type="Antibodypedia" id="17519">
    <property type="antibodies" value="187 antibodies from 25 providers"/>
</dbReference>
<dbReference type="DNASU" id="79731"/>
<dbReference type="Ensembl" id="ENST00000281038.10">
    <molecule id="Q96I59-1"/>
    <property type="protein sequence ID" value="ENSP00000281038.5"/>
    <property type="gene ID" value="ENSG00000137513.11"/>
</dbReference>
<dbReference type="Ensembl" id="ENST00000528850.5">
    <molecule id="Q96I59-2"/>
    <property type="protein sequence ID" value="ENSP00000432635.1"/>
    <property type="gene ID" value="ENSG00000137513.11"/>
</dbReference>
<dbReference type="Ensembl" id="ENST00000695115.1">
    <molecule id="Q96I59-2"/>
    <property type="protein sequence ID" value="ENSP00000511705.1"/>
    <property type="gene ID" value="ENSG00000137513.11"/>
</dbReference>
<dbReference type="Ensembl" id="ENST00000695342.1">
    <molecule id="Q96I59-2"/>
    <property type="protein sequence ID" value="ENSP00000511817.1"/>
    <property type="gene ID" value="ENSG00000137513.11"/>
</dbReference>
<dbReference type="Ensembl" id="ENST00000695343.1">
    <molecule id="Q96I59-2"/>
    <property type="protein sequence ID" value="ENSP00000511818.1"/>
    <property type="gene ID" value="ENSG00000137513.11"/>
</dbReference>
<dbReference type="Ensembl" id="ENST00000695348.1">
    <molecule id="Q96I59-2"/>
    <property type="protein sequence ID" value="ENSP00000511823.1"/>
    <property type="gene ID" value="ENSG00000137513.11"/>
</dbReference>
<dbReference type="GeneID" id="79731"/>
<dbReference type="KEGG" id="hsa:79731"/>
<dbReference type="MANE-Select" id="ENST00000281038.10">
    <property type="protein sequence ID" value="ENSP00000281038.5"/>
    <property type="RefSeq nucleotide sequence ID" value="NM_024678.6"/>
    <property type="RefSeq protein sequence ID" value="NP_078954.4"/>
</dbReference>
<dbReference type="UCSC" id="uc001ozi.3">
    <molecule id="Q96I59-1"/>
    <property type="organism name" value="human"/>
</dbReference>
<dbReference type="AGR" id="HGNC:26274"/>
<dbReference type="CTD" id="79731"/>
<dbReference type="DisGeNET" id="79731"/>
<dbReference type="GeneCards" id="NARS2"/>
<dbReference type="HGNC" id="HGNC:26274">
    <property type="gene designation" value="NARS2"/>
</dbReference>
<dbReference type="HPA" id="ENSG00000137513">
    <property type="expression patterns" value="Low tissue specificity"/>
</dbReference>
<dbReference type="MalaCards" id="NARS2"/>
<dbReference type="MIM" id="612803">
    <property type="type" value="gene"/>
</dbReference>
<dbReference type="MIM" id="616239">
    <property type="type" value="phenotype"/>
</dbReference>
<dbReference type="MIM" id="618434">
    <property type="type" value="phenotype"/>
</dbReference>
<dbReference type="neXtProt" id="NX_Q96I59"/>
<dbReference type="OpenTargets" id="ENSG00000137513"/>
<dbReference type="Orphanet" id="444458">
    <property type="disease" value="Combined oxidative phosphorylation defect type 24"/>
</dbReference>
<dbReference type="Orphanet" id="79134">
    <property type="disease" value="DEND syndrome"/>
</dbReference>
<dbReference type="Orphanet" id="90636">
    <property type="disease" value="Rare autosomal recessive non-syndromic sensorineural deafness type DFNB"/>
</dbReference>
<dbReference type="PharmGKB" id="PA143485554"/>
<dbReference type="VEuPathDB" id="HostDB:ENSG00000137513"/>
<dbReference type="eggNOG" id="KOG0554">
    <property type="taxonomic scope" value="Eukaryota"/>
</dbReference>
<dbReference type="GeneTree" id="ENSGT01030000234618"/>
<dbReference type="HOGENOM" id="CLU_004553_2_0_1"/>
<dbReference type="InParanoid" id="Q96I59"/>
<dbReference type="OMA" id="PEMAFYD"/>
<dbReference type="OrthoDB" id="1931232at2759"/>
<dbReference type="PAN-GO" id="Q96I59">
    <property type="GO annotations" value="3 GO annotations based on evolutionary models"/>
</dbReference>
<dbReference type="PhylomeDB" id="Q96I59"/>
<dbReference type="TreeFam" id="TF315088"/>
<dbReference type="BRENDA" id="6.1.1.22">
    <property type="organism ID" value="2681"/>
</dbReference>
<dbReference type="PathwayCommons" id="Q96I59"/>
<dbReference type="Reactome" id="R-HSA-379726">
    <property type="pathway name" value="Mitochondrial tRNA aminoacylation"/>
</dbReference>
<dbReference type="SignaLink" id="Q96I59"/>
<dbReference type="SIGNOR" id="Q96I59"/>
<dbReference type="BioGRID-ORCS" id="79731">
    <property type="hits" value="262 hits in 1180 CRISPR screens"/>
</dbReference>
<dbReference type="ChiTaRS" id="NARS2">
    <property type="organism name" value="human"/>
</dbReference>
<dbReference type="GenomeRNAi" id="79731"/>
<dbReference type="Pharos" id="Q96I59">
    <property type="development level" value="Tbio"/>
</dbReference>
<dbReference type="PRO" id="PR:Q96I59"/>
<dbReference type="Proteomes" id="UP000005640">
    <property type="component" value="Chromosome 11"/>
</dbReference>
<dbReference type="RNAct" id="Q96I59">
    <property type="molecule type" value="protein"/>
</dbReference>
<dbReference type="Bgee" id="ENSG00000137513">
    <property type="expression patterns" value="Expressed in secondary oocyte and 201 other cell types or tissues"/>
</dbReference>
<dbReference type="ExpressionAtlas" id="Q96I59">
    <property type="expression patterns" value="baseline and differential"/>
</dbReference>
<dbReference type="GO" id="GO:0005829">
    <property type="term" value="C:cytosol"/>
    <property type="evidence" value="ECO:0000314"/>
    <property type="project" value="HPA"/>
</dbReference>
<dbReference type="GO" id="GO:0005759">
    <property type="term" value="C:mitochondrial matrix"/>
    <property type="evidence" value="ECO:0007669"/>
    <property type="project" value="UniProtKB-SubCell"/>
</dbReference>
<dbReference type="GO" id="GO:0005739">
    <property type="term" value="C:mitochondrion"/>
    <property type="evidence" value="ECO:0000314"/>
    <property type="project" value="HPA"/>
</dbReference>
<dbReference type="GO" id="GO:0005654">
    <property type="term" value="C:nucleoplasm"/>
    <property type="evidence" value="ECO:0000314"/>
    <property type="project" value="HPA"/>
</dbReference>
<dbReference type="GO" id="GO:0004816">
    <property type="term" value="F:asparagine-tRNA ligase activity"/>
    <property type="evidence" value="ECO:0000250"/>
    <property type="project" value="UniProtKB"/>
</dbReference>
<dbReference type="GO" id="GO:0005524">
    <property type="term" value="F:ATP binding"/>
    <property type="evidence" value="ECO:0007669"/>
    <property type="project" value="UniProtKB-KW"/>
</dbReference>
<dbReference type="GO" id="GO:0003676">
    <property type="term" value="F:nucleic acid binding"/>
    <property type="evidence" value="ECO:0007669"/>
    <property type="project" value="InterPro"/>
</dbReference>
<dbReference type="GO" id="GO:0006421">
    <property type="term" value="P:asparaginyl-tRNA aminoacylation"/>
    <property type="evidence" value="ECO:0000250"/>
    <property type="project" value="UniProtKB"/>
</dbReference>
<dbReference type="CDD" id="cd00776">
    <property type="entry name" value="AsxRS_core"/>
    <property type="match status" value="1"/>
</dbReference>
<dbReference type="CDD" id="cd04318">
    <property type="entry name" value="EcAsnRS_like_N"/>
    <property type="match status" value="1"/>
</dbReference>
<dbReference type="FunFam" id="2.40.50.140:FF:000310">
    <property type="entry name" value="Probable asparagine--tRNA ligase, mitochondrial"/>
    <property type="match status" value="1"/>
</dbReference>
<dbReference type="FunFam" id="3.30.930.10:FF:000075">
    <property type="entry name" value="probable asparagine--tRNA ligase, mitochondrial isoform X1"/>
    <property type="match status" value="1"/>
</dbReference>
<dbReference type="Gene3D" id="3.30.930.10">
    <property type="entry name" value="Bira Bifunctional Protein, Domain 2"/>
    <property type="match status" value="1"/>
</dbReference>
<dbReference type="Gene3D" id="2.40.50.140">
    <property type="entry name" value="Nucleic acid-binding proteins"/>
    <property type="match status" value="1"/>
</dbReference>
<dbReference type="HAMAP" id="MF_00534">
    <property type="entry name" value="Asn_tRNA_synth"/>
    <property type="match status" value="1"/>
</dbReference>
<dbReference type="InterPro" id="IPR004364">
    <property type="entry name" value="Aa-tRNA-synt_II"/>
</dbReference>
<dbReference type="InterPro" id="IPR006195">
    <property type="entry name" value="aa-tRNA-synth_II"/>
</dbReference>
<dbReference type="InterPro" id="IPR045864">
    <property type="entry name" value="aa-tRNA-synth_II/BPL/LPL"/>
</dbReference>
<dbReference type="InterPro" id="IPR004522">
    <property type="entry name" value="Asn-tRNA-ligase"/>
</dbReference>
<dbReference type="InterPro" id="IPR002312">
    <property type="entry name" value="Asp/Asn-tRNA-synth_IIb"/>
</dbReference>
<dbReference type="InterPro" id="IPR012340">
    <property type="entry name" value="NA-bd_OB-fold"/>
</dbReference>
<dbReference type="InterPro" id="IPR004365">
    <property type="entry name" value="NA-bd_OB_tRNA"/>
</dbReference>
<dbReference type="NCBIfam" id="TIGR00457">
    <property type="entry name" value="asnS"/>
    <property type="match status" value="1"/>
</dbReference>
<dbReference type="NCBIfam" id="NF003037">
    <property type="entry name" value="PRK03932.1"/>
    <property type="match status" value="1"/>
</dbReference>
<dbReference type="PANTHER" id="PTHR22594:SF34">
    <property type="entry name" value="ASPARAGINE--TRNA LIGASE, MITOCHONDRIAL-RELATED"/>
    <property type="match status" value="1"/>
</dbReference>
<dbReference type="PANTHER" id="PTHR22594">
    <property type="entry name" value="ASPARTYL/LYSYL-TRNA SYNTHETASE"/>
    <property type="match status" value="1"/>
</dbReference>
<dbReference type="Pfam" id="PF00152">
    <property type="entry name" value="tRNA-synt_2"/>
    <property type="match status" value="1"/>
</dbReference>
<dbReference type="Pfam" id="PF01336">
    <property type="entry name" value="tRNA_anti-codon"/>
    <property type="match status" value="1"/>
</dbReference>
<dbReference type="PRINTS" id="PR01042">
    <property type="entry name" value="TRNASYNTHASP"/>
</dbReference>
<dbReference type="SUPFAM" id="SSF55681">
    <property type="entry name" value="Class II aaRS and biotin synthetases"/>
    <property type="match status" value="1"/>
</dbReference>
<dbReference type="SUPFAM" id="SSF50249">
    <property type="entry name" value="Nucleic acid-binding proteins"/>
    <property type="match status" value="1"/>
</dbReference>
<dbReference type="PROSITE" id="PS50862">
    <property type="entry name" value="AA_TRNA_LIGASE_II"/>
    <property type="match status" value="1"/>
</dbReference>
<reference key="1">
    <citation type="journal article" date="2006" name="Nature">
        <title>Human chromosome 11 DNA sequence and analysis including novel gene identification.</title>
        <authorList>
            <person name="Taylor T.D."/>
            <person name="Noguchi H."/>
            <person name="Totoki Y."/>
            <person name="Toyoda A."/>
            <person name="Kuroki Y."/>
            <person name="Dewar K."/>
            <person name="Lloyd C."/>
            <person name="Itoh T."/>
            <person name="Takeda T."/>
            <person name="Kim D.-W."/>
            <person name="She X."/>
            <person name="Barlow K.F."/>
            <person name="Bloom T."/>
            <person name="Bruford E."/>
            <person name="Chang J.L."/>
            <person name="Cuomo C.A."/>
            <person name="Eichler E."/>
            <person name="FitzGerald M.G."/>
            <person name="Jaffe D.B."/>
            <person name="LaButti K."/>
            <person name="Nicol R."/>
            <person name="Park H.-S."/>
            <person name="Seaman C."/>
            <person name="Sougnez C."/>
            <person name="Yang X."/>
            <person name="Zimmer A.R."/>
            <person name="Zody M.C."/>
            <person name="Birren B.W."/>
            <person name="Nusbaum C."/>
            <person name="Fujiyama A."/>
            <person name="Hattori M."/>
            <person name="Rogers J."/>
            <person name="Lander E.S."/>
            <person name="Sakaki Y."/>
        </authorList>
    </citation>
    <scope>NUCLEOTIDE SEQUENCE [LARGE SCALE GENOMIC DNA]</scope>
</reference>
<reference key="2">
    <citation type="submission" date="2005-07" db="EMBL/GenBank/DDBJ databases">
        <authorList>
            <person name="Mural R.J."/>
            <person name="Istrail S."/>
            <person name="Sutton G.G."/>
            <person name="Florea L."/>
            <person name="Halpern A.L."/>
            <person name="Mobarry C.M."/>
            <person name="Lippert R."/>
            <person name="Walenz B."/>
            <person name="Shatkay H."/>
            <person name="Dew I."/>
            <person name="Miller J.R."/>
            <person name="Flanigan M.J."/>
            <person name="Edwards N.J."/>
            <person name="Bolanos R."/>
            <person name="Fasulo D."/>
            <person name="Halldorsson B.V."/>
            <person name="Hannenhalli S."/>
            <person name="Turner R."/>
            <person name="Yooseph S."/>
            <person name="Lu F."/>
            <person name="Nusskern D.R."/>
            <person name="Shue B.C."/>
            <person name="Zheng X.H."/>
            <person name="Zhong F."/>
            <person name="Delcher A.L."/>
            <person name="Huson D.H."/>
            <person name="Kravitz S.A."/>
            <person name="Mouchard L."/>
            <person name="Reinert K."/>
            <person name="Remington K.A."/>
            <person name="Clark A.G."/>
            <person name="Waterman M.S."/>
            <person name="Eichler E.E."/>
            <person name="Adams M.D."/>
            <person name="Hunkapiller M.W."/>
            <person name="Myers E.W."/>
            <person name="Venter J.C."/>
        </authorList>
    </citation>
    <scope>NUCLEOTIDE SEQUENCE [LARGE SCALE GENOMIC DNA]</scope>
</reference>
<reference key="3">
    <citation type="journal article" date="2004" name="Genome Res.">
        <title>The status, quality, and expansion of the NIH full-length cDNA project: the Mammalian Gene Collection (MGC).</title>
        <authorList>
            <consortium name="The MGC Project Team"/>
        </authorList>
    </citation>
    <scope>NUCLEOTIDE SEQUENCE [LARGE SCALE MRNA]</scope>
    <scope>VARIANT THR-87</scope>
    <source>
        <tissue>Brain</tissue>
    </source>
</reference>
<reference key="4">
    <citation type="journal article" date="2005" name="Biochemistry">
        <title>Toward the full set of human mitochondrial aminoacyl-tRNA synthetases: characterization of AspRS and TyrRS.</title>
        <authorList>
            <person name="Bonnefond L."/>
            <person name="Fender A."/>
            <person name="Rudinger-Thirion J."/>
            <person name="Giege R."/>
            <person name="Florentz C."/>
            <person name="Sissler M."/>
        </authorList>
    </citation>
    <scope>IDENTIFICATION</scope>
</reference>
<reference key="5">
    <citation type="journal article" date="2009" name="Science">
        <title>Lysine acetylation targets protein complexes and co-regulates major cellular functions.</title>
        <authorList>
            <person name="Choudhary C."/>
            <person name="Kumar C."/>
            <person name="Gnad F."/>
            <person name="Nielsen M.L."/>
            <person name="Rehman M."/>
            <person name="Walther T.C."/>
            <person name="Olsen J.V."/>
            <person name="Mann M."/>
        </authorList>
    </citation>
    <scope>ACETYLATION [LARGE SCALE ANALYSIS] AT LYS-353</scope>
    <scope>IDENTIFICATION BY MASS SPECTROMETRY [LARGE SCALE ANALYSIS]</scope>
</reference>
<reference key="6">
    <citation type="journal article" date="2011" name="BMC Syst. Biol.">
        <title>Initial characterization of the human central proteome.</title>
        <authorList>
            <person name="Burkard T.R."/>
            <person name="Planyavsky M."/>
            <person name="Kaupe I."/>
            <person name="Breitwieser F.P."/>
            <person name="Buerckstuemmer T."/>
            <person name="Bennett K.L."/>
            <person name="Superti-Furga G."/>
            <person name="Colinge J."/>
        </authorList>
    </citation>
    <scope>IDENTIFICATION BY MASS SPECTROMETRY [LARGE SCALE ANALYSIS]</scope>
</reference>
<reference key="7">
    <citation type="journal article" date="2014" name="J. Proteomics">
        <title>An enzyme assisted RP-RPLC approach for in-depth analysis of human liver phosphoproteome.</title>
        <authorList>
            <person name="Bian Y."/>
            <person name="Song C."/>
            <person name="Cheng K."/>
            <person name="Dong M."/>
            <person name="Wang F."/>
            <person name="Huang J."/>
            <person name="Sun D."/>
            <person name="Wang L."/>
            <person name="Ye M."/>
            <person name="Zou H."/>
        </authorList>
    </citation>
    <scope>IDENTIFICATION BY MASS SPECTROMETRY [LARGE SCALE ANALYSIS]</scope>
    <source>
        <tissue>Liver</tissue>
    </source>
</reference>
<reference key="8">
    <citation type="journal article" date="2015" name="Hum. Mutat.">
        <title>Two siblings with homozygous pathogenic splice-site variant in mitochondrial asparaginyl-tRNA synthetase (NARS2).</title>
        <authorList>
            <person name="Vanlander A.V."/>
            <person name="Menten B."/>
            <person name="Smet J."/>
            <person name="De Meirleir L."/>
            <person name="Sante T."/>
            <person name="De Paepe B."/>
            <person name="Seneca S."/>
            <person name="Pearce S.F."/>
            <person name="Powell C.A."/>
            <person name="Vergult S."/>
            <person name="Michotte A."/>
            <person name="De Latter E."/>
            <person name="Vantomme L."/>
            <person name="Minczuk M."/>
            <person name="Van Coster R."/>
        </authorList>
    </citation>
    <scope>INVOLVEMENT IN COXPD24</scope>
    <scope>FUNCTION</scope>
    <scope>CATALYTIC ACTIVITY</scope>
</reference>
<reference key="9">
    <citation type="journal article" date="2015" name="Proteomics">
        <title>N-terminome analysis of the human mitochondrial proteome.</title>
        <authorList>
            <person name="Vaca Jacome A.S."/>
            <person name="Rabilloud T."/>
            <person name="Schaeffer-Reiss C."/>
            <person name="Rompais M."/>
            <person name="Ayoub D."/>
            <person name="Lane L."/>
            <person name="Bairoch A."/>
            <person name="Van Dorsselaer A."/>
            <person name="Carapito C."/>
        </authorList>
    </citation>
    <scope>IDENTIFICATION BY MASS SPECTROMETRY [LARGE SCALE ANALYSIS]</scope>
</reference>
<reference key="10">
    <citation type="journal article" date="2015" name="Mol. Genet. Genomic Med.">
        <title>Whole exome sequencing reveals mutations in NARS2 and PARS2, encoding the mitochondrial asparaginyl-tRNA synthetase and prolyl-tRNA synthetase, in patients with Alpers syndrome.</title>
        <authorList>
            <person name="Sofou K."/>
            <person name="Kollberg G."/>
            <person name="Holmstroem M."/>
            <person name="Davila M."/>
            <person name="Darin N."/>
            <person name="Gustafsson C.M."/>
            <person name="Holme E."/>
            <person name="Oldfors A."/>
            <person name="Tulinius M."/>
            <person name="Asin-Cayuela J."/>
        </authorList>
    </citation>
    <scope>INVOLVEMENT IN COXPD24</scope>
    <scope>VARIANT COXPD24 LEU-214</scope>
</reference>
<reference key="11">
    <citation type="journal article" date="2015" name="PLoS Genet.">
        <title>Mutations of human NARS2, encoding the mitochondrial asparaginyl-tRNA synthetase, cause nonsyndromic deafness and Leigh syndrome.</title>
        <authorList>
            <person name="Simon M."/>
            <person name="Richard E.M."/>
            <person name="Wang X."/>
            <person name="Shahzad M."/>
            <person name="Huang V.H."/>
            <person name="Qaiser T.A."/>
            <person name="Potluri P."/>
            <person name="Mahl S.E."/>
            <person name="Davila A."/>
            <person name="Nazli S."/>
            <person name="Hancock S."/>
            <person name="Yu M."/>
            <person name="Gargus J."/>
            <person name="Chang R."/>
            <person name="Al-Sheqaih N."/>
            <person name="Newman W.G."/>
            <person name="Abdenur J."/>
            <person name="Starr A."/>
            <person name="Hegde R."/>
            <person name="Dorn T."/>
            <person name="Busch A."/>
            <person name="Park E."/>
            <person name="Wu J."/>
            <person name="Schwenzer H."/>
            <person name="Flierl A."/>
            <person name="Florentz C."/>
            <person name="Sissler M."/>
            <person name="Khan S.N."/>
            <person name="Li R."/>
            <person name="Guan M.X."/>
            <person name="Friedman T.B."/>
            <person name="Wu D.K."/>
            <person name="Procaccio V."/>
            <person name="Riazuddin S."/>
            <person name="Wallace D.C."/>
            <person name="Ahmed Z.M."/>
            <person name="Huang T."/>
            <person name="Riazuddin S."/>
        </authorList>
    </citation>
    <scope>SUBCELLULAR LOCATION</scope>
    <scope>SUBUNIT</scope>
    <scope>INVOLVEMENT IN COXPD24</scope>
    <scope>INVOLVEMENT IN DFNB94</scope>
    <scope>VARIANTS COXPD24 323-TYR--LEU-477 DEL AND SER-381</scope>
    <scope>VARIANT DFNB94 PHE-213</scope>
    <scope>CHARACTERIZATION OF VARIANT DFNB94 PHE-213</scope>
    <scope>CHARACTERIZATION OF VARIANT COXPD24 SER-381</scope>
</reference>
<reference key="12">
    <citation type="journal article" date="2022" name="Transl. Pediatr.">
        <title>Study of novel NARS2 variants in patient of combined oxidative phosphorylation deficiency 24.</title>
        <authorList>
            <person name="Zhang Y."/>
            <person name="Zhao X."/>
            <person name="Xu Y."/>
            <person name="Chen L."/>
            <person name="Li N."/>
            <person name="Yao R."/>
            <person name="Wang X."/>
            <person name="Wang J."/>
            <person name="Yu T."/>
        </authorList>
    </citation>
    <scope>VARIANTS COXPD24 ASP-381 AND CYS-430</scope>
    <scope>CHARACTERIZATION OF VARIANTS COXPD24 ASP-381 AND CYS-430</scope>
    <scope>SUBUNIT</scope>
    <scope>SUBCELLULAR LOCATION</scope>
</reference>
<keyword id="KW-0007">Acetylation</keyword>
<keyword id="KW-0025">Alternative splicing</keyword>
<keyword id="KW-0030">Aminoacyl-tRNA synthetase</keyword>
<keyword id="KW-0067">ATP-binding</keyword>
<keyword id="KW-0209">Deafness</keyword>
<keyword id="KW-0225">Disease variant</keyword>
<keyword id="KW-0431">Leigh syndrome</keyword>
<keyword id="KW-0436">Ligase</keyword>
<keyword id="KW-0496">Mitochondrion</keyword>
<keyword id="KW-1010">Non-syndromic deafness</keyword>
<keyword id="KW-0547">Nucleotide-binding</keyword>
<keyword id="KW-1274">Primary mitochondrial disease</keyword>
<keyword id="KW-0648">Protein biosynthesis</keyword>
<keyword id="KW-1267">Proteomics identification</keyword>
<keyword id="KW-1185">Reference proteome</keyword>
<keyword id="KW-0809">Transit peptide</keyword>
<accession>Q96I59</accession>
<accession>G3V178</accession>
<sequence>MLGVRCLLRSVRFCSSAPFPKHKPSAKLSVRDALGAQNASGERIKIQGWIRSVRSQKEVLFLHVNDGSSLESLQVVADSGLDSRELNFGSSVEVQGQLIKSPSKRQNVELKAEKIKVIGNCDAKDFPIKYKERHPLEYLRQYPHFRCRTNVLGSILRIRSEATAAIHSFFKDSGFVHIHTPIITSNDSEGAGELFQLEPSGKLKVPEENFFNVPAFLTVSGQLHLEVMSGAFTQVFTFGPTFRAENSQSRRHLAEFYMIEAEISFVDSLQDLMQVIEELFKATTMMVLSKCPEDVELCHKFIAPGQKDRLEHMLKNNFLIISYTEAVEILKQASQNFTFTPEWGADLRTEHEKYLVKHCGNIPVFVINYPLTLKPFYMRDNEDGPQHTVAAVDLLVPGVGELFGGGLREERYHFLEERLARSGLTEVYQWYLDLRRFGSVPHGGFGMGFERYLQCILGVDNIKDVIPFPRFPHSCLL</sequence>